<organism>
    <name type="scientific">Shigella sonnei (strain Ss046)</name>
    <dbReference type="NCBI Taxonomy" id="300269"/>
    <lineage>
        <taxon>Bacteria</taxon>
        <taxon>Pseudomonadati</taxon>
        <taxon>Pseudomonadota</taxon>
        <taxon>Gammaproteobacteria</taxon>
        <taxon>Enterobacterales</taxon>
        <taxon>Enterobacteriaceae</taxon>
        <taxon>Shigella</taxon>
    </lineage>
</organism>
<dbReference type="EMBL" id="CP000038">
    <property type="protein sequence ID" value="AAZ90020.1"/>
    <property type="molecule type" value="Genomic_DNA"/>
</dbReference>
<dbReference type="RefSeq" id="WP_000301864.1">
    <property type="nucleotide sequence ID" value="NC_007384.1"/>
</dbReference>
<dbReference type="SMR" id="Q3YWU2"/>
<dbReference type="GeneID" id="93778670"/>
<dbReference type="KEGG" id="ssn:SSON_3458"/>
<dbReference type="HOGENOM" id="CLU_036235_2_1_6"/>
<dbReference type="Proteomes" id="UP000002529">
    <property type="component" value="Chromosome"/>
</dbReference>
<dbReference type="GO" id="GO:0005829">
    <property type="term" value="C:cytosol"/>
    <property type="evidence" value="ECO:0007669"/>
    <property type="project" value="UniProtKB-ARBA"/>
</dbReference>
<dbReference type="GO" id="GO:0015934">
    <property type="term" value="C:large ribosomal subunit"/>
    <property type="evidence" value="ECO:0007669"/>
    <property type="project" value="InterPro"/>
</dbReference>
<dbReference type="GO" id="GO:0019843">
    <property type="term" value="F:rRNA binding"/>
    <property type="evidence" value="ECO:0007669"/>
    <property type="project" value="UniProtKB-UniRule"/>
</dbReference>
<dbReference type="GO" id="GO:0003735">
    <property type="term" value="F:structural constituent of ribosome"/>
    <property type="evidence" value="ECO:0007669"/>
    <property type="project" value="InterPro"/>
</dbReference>
<dbReference type="GO" id="GO:0016740">
    <property type="term" value="F:transferase activity"/>
    <property type="evidence" value="ECO:0007669"/>
    <property type="project" value="InterPro"/>
</dbReference>
<dbReference type="GO" id="GO:0002181">
    <property type="term" value="P:cytoplasmic translation"/>
    <property type="evidence" value="ECO:0007669"/>
    <property type="project" value="TreeGrafter"/>
</dbReference>
<dbReference type="FunFam" id="2.30.30.30:FF:000001">
    <property type="entry name" value="50S ribosomal protein L2"/>
    <property type="match status" value="1"/>
</dbReference>
<dbReference type="FunFam" id="2.40.50.140:FF:000003">
    <property type="entry name" value="50S ribosomal protein L2"/>
    <property type="match status" value="1"/>
</dbReference>
<dbReference type="FunFam" id="4.10.950.10:FF:000001">
    <property type="entry name" value="50S ribosomal protein L2"/>
    <property type="match status" value="1"/>
</dbReference>
<dbReference type="Gene3D" id="2.30.30.30">
    <property type="match status" value="1"/>
</dbReference>
<dbReference type="Gene3D" id="2.40.50.140">
    <property type="entry name" value="Nucleic acid-binding proteins"/>
    <property type="match status" value="1"/>
</dbReference>
<dbReference type="Gene3D" id="4.10.950.10">
    <property type="entry name" value="Ribosomal protein L2, domain 3"/>
    <property type="match status" value="1"/>
</dbReference>
<dbReference type="HAMAP" id="MF_01320_B">
    <property type="entry name" value="Ribosomal_uL2_B"/>
    <property type="match status" value="1"/>
</dbReference>
<dbReference type="InterPro" id="IPR012340">
    <property type="entry name" value="NA-bd_OB-fold"/>
</dbReference>
<dbReference type="InterPro" id="IPR014722">
    <property type="entry name" value="Rib_uL2_dom2"/>
</dbReference>
<dbReference type="InterPro" id="IPR002171">
    <property type="entry name" value="Ribosomal_uL2"/>
</dbReference>
<dbReference type="InterPro" id="IPR005880">
    <property type="entry name" value="Ribosomal_uL2_bac/org-type"/>
</dbReference>
<dbReference type="InterPro" id="IPR022669">
    <property type="entry name" value="Ribosomal_uL2_C"/>
</dbReference>
<dbReference type="InterPro" id="IPR022671">
    <property type="entry name" value="Ribosomal_uL2_CS"/>
</dbReference>
<dbReference type="InterPro" id="IPR014726">
    <property type="entry name" value="Ribosomal_uL2_dom3"/>
</dbReference>
<dbReference type="InterPro" id="IPR022666">
    <property type="entry name" value="Ribosomal_uL2_RNA-bd_dom"/>
</dbReference>
<dbReference type="InterPro" id="IPR008991">
    <property type="entry name" value="Translation_prot_SH3-like_sf"/>
</dbReference>
<dbReference type="NCBIfam" id="TIGR01171">
    <property type="entry name" value="rplB_bact"/>
    <property type="match status" value="1"/>
</dbReference>
<dbReference type="PANTHER" id="PTHR13691:SF5">
    <property type="entry name" value="LARGE RIBOSOMAL SUBUNIT PROTEIN UL2M"/>
    <property type="match status" value="1"/>
</dbReference>
<dbReference type="PANTHER" id="PTHR13691">
    <property type="entry name" value="RIBOSOMAL PROTEIN L2"/>
    <property type="match status" value="1"/>
</dbReference>
<dbReference type="Pfam" id="PF00181">
    <property type="entry name" value="Ribosomal_L2"/>
    <property type="match status" value="1"/>
</dbReference>
<dbReference type="Pfam" id="PF03947">
    <property type="entry name" value="Ribosomal_L2_C"/>
    <property type="match status" value="1"/>
</dbReference>
<dbReference type="PIRSF" id="PIRSF002158">
    <property type="entry name" value="Ribosomal_L2"/>
    <property type="match status" value="1"/>
</dbReference>
<dbReference type="SMART" id="SM01383">
    <property type="entry name" value="Ribosomal_L2"/>
    <property type="match status" value="1"/>
</dbReference>
<dbReference type="SMART" id="SM01382">
    <property type="entry name" value="Ribosomal_L2_C"/>
    <property type="match status" value="1"/>
</dbReference>
<dbReference type="SUPFAM" id="SSF50249">
    <property type="entry name" value="Nucleic acid-binding proteins"/>
    <property type="match status" value="1"/>
</dbReference>
<dbReference type="SUPFAM" id="SSF50104">
    <property type="entry name" value="Translation proteins SH3-like domain"/>
    <property type="match status" value="1"/>
</dbReference>
<dbReference type="PROSITE" id="PS00467">
    <property type="entry name" value="RIBOSOMAL_L2"/>
    <property type="match status" value="1"/>
</dbReference>
<reference key="1">
    <citation type="journal article" date="2005" name="Nucleic Acids Res.">
        <title>Genome dynamics and diversity of Shigella species, the etiologic agents of bacillary dysentery.</title>
        <authorList>
            <person name="Yang F."/>
            <person name="Yang J."/>
            <person name="Zhang X."/>
            <person name="Chen L."/>
            <person name="Jiang Y."/>
            <person name="Yan Y."/>
            <person name="Tang X."/>
            <person name="Wang J."/>
            <person name="Xiong Z."/>
            <person name="Dong J."/>
            <person name="Xue Y."/>
            <person name="Zhu Y."/>
            <person name="Xu X."/>
            <person name="Sun L."/>
            <person name="Chen S."/>
            <person name="Nie H."/>
            <person name="Peng J."/>
            <person name="Xu J."/>
            <person name="Wang Y."/>
            <person name="Yuan Z."/>
            <person name="Wen Y."/>
            <person name="Yao Z."/>
            <person name="Shen Y."/>
            <person name="Qiang B."/>
            <person name="Hou Y."/>
            <person name="Yu J."/>
            <person name="Jin Q."/>
        </authorList>
    </citation>
    <scope>NUCLEOTIDE SEQUENCE [LARGE SCALE GENOMIC DNA]</scope>
    <source>
        <strain>Ss046</strain>
    </source>
</reference>
<comment type="function">
    <text evidence="1">One of the primary rRNA binding proteins. Required for association of the 30S and 50S subunits to form the 70S ribosome, for tRNA binding and peptide bond formation. It has been suggested to have peptidyltransferase activity; this is somewhat controversial. Makes several contacts with the 16S rRNA in the 70S ribosome.</text>
</comment>
<comment type="subunit">
    <text evidence="1">Part of the 50S ribosomal subunit. Forms a bridge to the 30S subunit in the 70S ribosome.</text>
</comment>
<comment type="similarity">
    <text evidence="1">Belongs to the universal ribosomal protein uL2 family.</text>
</comment>
<evidence type="ECO:0000255" key="1">
    <source>
        <dbReference type="HAMAP-Rule" id="MF_01320"/>
    </source>
</evidence>
<evidence type="ECO:0000256" key="2">
    <source>
        <dbReference type="SAM" id="MobiDB-lite"/>
    </source>
</evidence>
<evidence type="ECO:0000305" key="3"/>
<feature type="chain" id="PRO_0000237242" description="Large ribosomal subunit protein uL2">
    <location>
        <begin position="1"/>
        <end position="273"/>
    </location>
</feature>
<feature type="region of interest" description="Disordered" evidence="2">
    <location>
        <begin position="28"/>
        <end position="53"/>
    </location>
</feature>
<feature type="region of interest" description="Disordered" evidence="2">
    <location>
        <begin position="221"/>
        <end position="273"/>
    </location>
</feature>
<feature type="compositionally biased region" description="Low complexity" evidence="2">
    <location>
        <begin position="39"/>
        <end position="48"/>
    </location>
</feature>
<feature type="modified residue" description="N6-acetyllysine" evidence="1">
    <location>
        <position position="242"/>
    </location>
</feature>
<proteinExistence type="inferred from homology"/>
<keyword id="KW-0007">Acetylation</keyword>
<keyword id="KW-1185">Reference proteome</keyword>
<keyword id="KW-0687">Ribonucleoprotein</keyword>
<keyword id="KW-0689">Ribosomal protein</keyword>
<keyword id="KW-0694">RNA-binding</keyword>
<keyword id="KW-0699">rRNA-binding</keyword>
<name>RL2_SHISS</name>
<gene>
    <name evidence="1" type="primary">rplB</name>
    <name type="ordered locus">SSON_3458</name>
</gene>
<accession>Q3YWU2</accession>
<protein>
    <recommendedName>
        <fullName evidence="1">Large ribosomal subunit protein uL2</fullName>
    </recommendedName>
    <alternativeName>
        <fullName evidence="3">50S ribosomal protein L2</fullName>
    </alternativeName>
</protein>
<sequence>MAVVKCKPTSPGRRHVVKVVNPELHKGKPFAPLLEKNSKSGGRNNNGRITTRHIGGGHKQAYRIVDFKRNKDGIPAVVERLEYDPNRSANIALVLYKDGERRYILAPKGLKAGDQIQSGVDAAIKPGNTLPMRNIPVGSTVHNVEMKPGKGGQLARSAGTYVQIVARDGAYVTLRLRSGEMRKVEADCRATLGEVGNAEHMLRVLGKAGAARWRGVRPTVRGTAMNPVDHPHGGGEGRNFGKHPVTPWGVQTKGKKTRSNKRTDKFIVRRRSK</sequence>